<reference key="1">
    <citation type="journal article" date="2005" name="Science">
        <title>The transcriptional landscape of the mammalian genome.</title>
        <authorList>
            <person name="Carninci P."/>
            <person name="Kasukawa T."/>
            <person name="Katayama S."/>
            <person name="Gough J."/>
            <person name="Frith M.C."/>
            <person name="Maeda N."/>
            <person name="Oyama R."/>
            <person name="Ravasi T."/>
            <person name="Lenhard B."/>
            <person name="Wells C."/>
            <person name="Kodzius R."/>
            <person name="Shimokawa K."/>
            <person name="Bajic V.B."/>
            <person name="Brenner S.E."/>
            <person name="Batalov S."/>
            <person name="Forrest A.R."/>
            <person name="Zavolan M."/>
            <person name="Davis M.J."/>
            <person name="Wilming L.G."/>
            <person name="Aidinis V."/>
            <person name="Allen J.E."/>
            <person name="Ambesi-Impiombato A."/>
            <person name="Apweiler R."/>
            <person name="Aturaliya R.N."/>
            <person name="Bailey T.L."/>
            <person name="Bansal M."/>
            <person name="Baxter L."/>
            <person name="Beisel K.W."/>
            <person name="Bersano T."/>
            <person name="Bono H."/>
            <person name="Chalk A.M."/>
            <person name="Chiu K.P."/>
            <person name="Choudhary V."/>
            <person name="Christoffels A."/>
            <person name="Clutterbuck D.R."/>
            <person name="Crowe M.L."/>
            <person name="Dalla E."/>
            <person name="Dalrymple B.P."/>
            <person name="de Bono B."/>
            <person name="Della Gatta G."/>
            <person name="di Bernardo D."/>
            <person name="Down T."/>
            <person name="Engstrom P."/>
            <person name="Fagiolini M."/>
            <person name="Faulkner G."/>
            <person name="Fletcher C.F."/>
            <person name="Fukushima T."/>
            <person name="Furuno M."/>
            <person name="Futaki S."/>
            <person name="Gariboldi M."/>
            <person name="Georgii-Hemming P."/>
            <person name="Gingeras T.R."/>
            <person name="Gojobori T."/>
            <person name="Green R.E."/>
            <person name="Gustincich S."/>
            <person name="Harbers M."/>
            <person name="Hayashi Y."/>
            <person name="Hensch T.K."/>
            <person name="Hirokawa N."/>
            <person name="Hill D."/>
            <person name="Huminiecki L."/>
            <person name="Iacono M."/>
            <person name="Ikeo K."/>
            <person name="Iwama A."/>
            <person name="Ishikawa T."/>
            <person name="Jakt M."/>
            <person name="Kanapin A."/>
            <person name="Katoh M."/>
            <person name="Kawasawa Y."/>
            <person name="Kelso J."/>
            <person name="Kitamura H."/>
            <person name="Kitano H."/>
            <person name="Kollias G."/>
            <person name="Krishnan S.P."/>
            <person name="Kruger A."/>
            <person name="Kummerfeld S.K."/>
            <person name="Kurochkin I.V."/>
            <person name="Lareau L.F."/>
            <person name="Lazarevic D."/>
            <person name="Lipovich L."/>
            <person name="Liu J."/>
            <person name="Liuni S."/>
            <person name="McWilliam S."/>
            <person name="Madan Babu M."/>
            <person name="Madera M."/>
            <person name="Marchionni L."/>
            <person name="Matsuda H."/>
            <person name="Matsuzawa S."/>
            <person name="Miki H."/>
            <person name="Mignone F."/>
            <person name="Miyake S."/>
            <person name="Morris K."/>
            <person name="Mottagui-Tabar S."/>
            <person name="Mulder N."/>
            <person name="Nakano N."/>
            <person name="Nakauchi H."/>
            <person name="Ng P."/>
            <person name="Nilsson R."/>
            <person name="Nishiguchi S."/>
            <person name="Nishikawa S."/>
            <person name="Nori F."/>
            <person name="Ohara O."/>
            <person name="Okazaki Y."/>
            <person name="Orlando V."/>
            <person name="Pang K.C."/>
            <person name="Pavan W.J."/>
            <person name="Pavesi G."/>
            <person name="Pesole G."/>
            <person name="Petrovsky N."/>
            <person name="Piazza S."/>
            <person name="Reed J."/>
            <person name="Reid J.F."/>
            <person name="Ring B.Z."/>
            <person name="Ringwald M."/>
            <person name="Rost B."/>
            <person name="Ruan Y."/>
            <person name="Salzberg S.L."/>
            <person name="Sandelin A."/>
            <person name="Schneider C."/>
            <person name="Schoenbach C."/>
            <person name="Sekiguchi K."/>
            <person name="Semple C.A."/>
            <person name="Seno S."/>
            <person name="Sessa L."/>
            <person name="Sheng Y."/>
            <person name="Shibata Y."/>
            <person name="Shimada H."/>
            <person name="Shimada K."/>
            <person name="Silva D."/>
            <person name="Sinclair B."/>
            <person name="Sperling S."/>
            <person name="Stupka E."/>
            <person name="Sugiura K."/>
            <person name="Sultana R."/>
            <person name="Takenaka Y."/>
            <person name="Taki K."/>
            <person name="Tammoja K."/>
            <person name="Tan S.L."/>
            <person name="Tang S."/>
            <person name="Taylor M.S."/>
            <person name="Tegner J."/>
            <person name="Teichmann S.A."/>
            <person name="Ueda H.R."/>
            <person name="van Nimwegen E."/>
            <person name="Verardo R."/>
            <person name="Wei C.L."/>
            <person name="Yagi K."/>
            <person name="Yamanishi H."/>
            <person name="Zabarovsky E."/>
            <person name="Zhu S."/>
            <person name="Zimmer A."/>
            <person name="Hide W."/>
            <person name="Bult C."/>
            <person name="Grimmond S.M."/>
            <person name="Teasdale R.D."/>
            <person name="Liu E.T."/>
            <person name="Brusic V."/>
            <person name="Quackenbush J."/>
            <person name="Wahlestedt C."/>
            <person name="Mattick J.S."/>
            <person name="Hume D.A."/>
            <person name="Kai C."/>
            <person name="Sasaki D."/>
            <person name="Tomaru Y."/>
            <person name="Fukuda S."/>
            <person name="Kanamori-Katayama M."/>
            <person name="Suzuki M."/>
            <person name="Aoki J."/>
            <person name="Arakawa T."/>
            <person name="Iida J."/>
            <person name="Imamura K."/>
            <person name="Itoh M."/>
            <person name="Kato T."/>
            <person name="Kawaji H."/>
            <person name="Kawagashira N."/>
            <person name="Kawashima T."/>
            <person name="Kojima M."/>
            <person name="Kondo S."/>
            <person name="Konno H."/>
            <person name="Nakano K."/>
            <person name="Ninomiya N."/>
            <person name="Nishio T."/>
            <person name="Okada M."/>
            <person name="Plessy C."/>
            <person name="Shibata K."/>
            <person name="Shiraki T."/>
            <person name="Suzuki S."/>
            <person name="Tagami M."/>
            <person name="Waki K."/>
            <person name="Watahiki A."/>
            <person name="Okamura-Oho Y."/>
            <person name="Suzuki H."/>
            <person name="Kawai J."/>
            <person name="Hayashizaki Y."/>
        </authorList>
    </citation>
    <scope>NUCLEOTIDE SEQUENCE [LARGE SCALE MRNA]</scope>
    <source>
        <strain>C57BL/6J</strain>
        <tissue>Blastocyst</tissue>
        <tissue>Cerebellum</tissue>
        <tissue>Embryo</tissue>
        <tissue>Embryonic eye</tissue>
        <tissue>Embryonic stem cell</tissue>
        <tissue>Forelimb</tissue>
        <tissue>Medulla oblongata</tissue>
        <tissue>Olfactory bulb</tissue>
        <tissue>Testis</tissue>
    </source>
</reference>
<reference key="2">
    <citation type="journal article" date="2004" name="Genome Res.">
        <title>The status, quality, and expansion of the NIH full-length cDNA project: the Mammalian Gene Collection (MGC).</title>
        <authorList>
            <consortium name="The MGC Project Team"/>
        </authorList>
    </citation>
    <scope>NUCLEOTIDE SEQUENCE [LARGE SCALE MRNA]</scope>
    <source>
        <strain>FVB/N</strain>
        <tissue>Mammary gland</tissue>
    </source>
</reference>
<proteinExistence type="evidence at transcript level"/>
<feature type="chain" id="PRO_0000145107" description="Eukaryotic translation initiation factor 1A, X-chromosomal">
    <location>
        <begin position="1"/>
        <end position="144"/>
    </location>
</feature>
<feature type="domain" description="S1-like">
    <location>
        <begin position="22"/>
        <end position="96"/>
    </location>
</feature>
<feature type="region of interest" description="Disordered" evidence="2">
    <location>
        <begin position="1"/>
        <end position="26"/>
    </location>
</feature>
<feature type="region of interest" description="Disordered" evidence="2">
    <location>
        <begin position="114"/>
        <end position="144"/>
    </location>
</feature>
<feature type="compositionally biased region" description="Basic residues" evidence="2">
    <location>
        <begin position="1"/>
        <end position="15"/>
    </location>
</feature>
<feature type="compositionally biased region" description="Basic and acidic residues" evidence="2">
    <location>
        <begin position="16"/>
        <end position="26"/>
    </location>
</feature>
<feature type="compositionally biased region" description="Acidic residues" evidence="2">
    <location>
        <begin position="124"/>
        <end position="144"/>
    </location>
</feature>
<feature type="sequence conflict" description="In Ref. 1; BAC36971." evidence="3" ref="1">
    <original>R</original>
    <variation>G</variation>
    <location>
        <position position="46"/>
    </location>
</feature>
<feature type="sequence conflict" description="In Ref. 1; BAB23869." evidence="3" ref="1">
    <original>G</original>
    <variation>R</variation>
    <location>
        <position position="63"/>
    </location>
</feature>
<feature type="sequence conflict" description="In Ref. 1; BAC27259." evidence="3" ref="1">
    <original>Y</original>
    <variation>N</variation>
    <location>
        <position position="95"/>
    </location>
</feature>
<feature type="sequence conflict" description="In Ref. 1; BAC27130." evidence="3" ref="1">
    <original>D</original>
    <variation>E</variation>
    <location>
        <position position="136"/>
    </location>
</feature>
<dbReference type="EMBL" id="AK005185">
    <property type="protein sequence ID" value="BAB23869.1"/>
    <property type="molecule type" value="mRNA"/>
</dbReference>
<dbReference type="EMBL" id="AK007301">
    <property type="protein sequence ID" value="BAB24942.1"/>
    <property type="molecule type" value="mRNA"/>
</dbReference>
<dbReference type="EMBL" id="AK012233">
    <property type="protein sequence ID" value="BAB28110.1"/>
    <property type="molecule type" value="mRNA"/>
</dbReference>
<dbReference type="EMBL" id="AK012464">
    <property type="protein sequence ID" value="BAB28259.3"/>
    <property type="molecule type" value="mRNA"/>
</dbReference>
<dbReference type="EMBL" id="AK012714">
    <property type="protein sequence ID" value="BAB28428.1"/>
    <property type="molecule type" value="mRNA"/>
</dbReference>
<dbReference type="EMBL" id="AK021283">
    <property type="protein sequence ID" value="BAB32361.1"/>
    <property type="molecule type" value="mRNA"/>
</dbReference>
<dbReference type="EMBL" id="AK030774">
    <property type="protein sequence ID" value="BAC27130.1"/>
    <property type="molecule type" value="mRNA"/>
</dbReference>
<dbReference type="EMBL" id="AK031113">
    <property type="protein sequence ID" value="BAC27259.1"/>
    <property type="molecule type" value="mRNA"/>
</dbReference>
<dbReference type="EMBL" id="AK077710">
    <property type="protein sequence ID" value="BAC36971.1"/>
    <property type="molecule type" value="mRNA"/>
</dbReference>
<dbReference type="EMBL" id="AK090053">
    <property type="protein sequence ID" value="BAC41069.1"/>
    <property type="molecule type" value="mRNA"/>
</dbReference>
<dbReference type="EMBL" id="AK134827">
    <property type="protein sequence ID" value="BAE22301.1"/>
    <property type="molecule type" value="mRNA"/>
</dbReference>
<dbReference type="EMBL" id="AK134969">
    <property type="protein sequence ID" value="BAE22363.1"/>
    <property type="molecule type" value="mRNA"/>
</dbReference>
<dbReference type="EMBL" id="AK165574">
    <property type="protein sequence ID" value="BAE38266.1"/>
    <property type="molecule type" value="mRNA"/>
</dbReference>
<dbReference type="EMBL" id="AK166629">
    <property type="protein sequence ID" value="BAE38904.1"/>
    <property type="molecule type" value="mRNA"/>
</dbReference>
<dbReference type="EMBL" id="AK166852">
    <property type="protein sequence ID" value="BAE39071.1"/>
    <property type="molecule type" value="mRNA"/>
</dbReference>
<dbReference type="EMBL" id="BC027284">
    <property type="protein sequence ID" value="AAH27284.1"/>
    <property type="molecule type" value="mRNA"/>
</dbReference>
<dbReference type="CCDS" id="CCDS41192.1"/>
<dbReference type="RefSeq" id="NP_079713.2">
    <property type="nucleotide sequence ID" value="NM_025437.4"/>
</dbReference>
<dbReference type="SMR" id="Q8BMJ3"/>
<dbReference type="BioGRID" id="211316">
    <property type="interactions" value="3"/>
</dbReference>
<dbReference type="FunCoup" id="Q8BMJ3">
    <property type="interactions" value="1898"/>
</dbReference>
<dbReference type="IntAct" id="Q8BMJ3">
    <property type="interactions" value="1"/>
</dbReference>
<dbReference type="STRING" id="10090.ENSMUSP00000084387"/>
<dbReference type="iPTMnet" id="Q8BMJ3"/>
<dbReference type="PhosphoSitePlus" id="Q8BMJ3"/>
<dbReference type="REPRODUCTION-2DPAGE" id="Q8BMJ3"/>
<dbReference type="jPOST" id="Q8BMJ3"/>
<dbReference type="PaxDb" id="10090-ENSMUSP00000084387"/>
<dbReference type="PeptideAtlas" id="Q8BMJ3"/>
<dbReference type="ProteomicsDB" id="267091"/>
<dbReference type="Pumba" id="Q8BMJ3"/>
<dbReference type="Antibodypedia" id="9819">
    <property type="antibodies" value="110 antibodies from 24 providers"/>
</dbReference>
<dbReference type="DNASU" id="66235"/>
<dbReference type="Ensembl" id="ENSMUST00000087143.7">
    <property type="protein sequence ID" value="ENSMUSP00000084387.7"/>
    <property type="gene ID" value="ENSMUSG00000067194.7"/>
</dbReference>
<dbReference type="GeneID" id="66235"/>
<dbReference type="KEGG" id="mmu:66235"/>
<dbReference type="UCSC" id="uc009usl.1">
    <property type="organism name" value="mouse"/>
</dbReference>
<dbReference type="AGR" id="MGI:1913485"/>
<dbReference type="CTD" id="1964"/>
<dbReference type="MGI" id="MGI:1913485">
    <property type="gene designation" value="Eif1ax"/>
</dbReference>
<dbReference type="VEuPathDB" id="HostDB:ENSMUSG00000067194"/>
<dbReference type="eggNOG" id="KOG3403">
    <property type="taxonomic scope" value="Eukaryota"/>
</dbReference>
<dbReference type="GeneTree" id="ENSGT00390000008256"/>
<dbReference type="HOGENOM" id="CLU_109098_0_1_1"/>
<dbReference type="InParanoid" id="Q8BMJ3"/>
<dbReference type="OMA" id="WRYTRTE"/>
<dbReference type="OrthoDB" id="274995at2759"/>
<dbReference type="PhylomeDB" id="Q8BMJ3"/>
<dbReference type="TreeFam" id="TF350394"/>
<dbReference type="Reactome" id="R-MMU-156827">
    <property type="pathway name" value="L13a-mediated translational silencing of Ceruloplasmin expression"/>
</dbReference>
<dbReference type="Reactome" id="R-MMU-72649">
    <property type="pathway name" value="Translation initiation complex formation"/>
</dbReference>
<dbReference type="Reactome" id="R-MMU-72689">
    <property type="pathway name" value="Formation of a pool of free 40S subunits"/>
</dbReference>
<dbReference type="Reactome" id="R-MMU-72695">
    <property type="pathway name" value="Formation of the ternary complex, and subsequently, the 43S complex"/>
</dbReference>
<dbReference type="Reactome" id="R-MMU-72702">
    <property type="pathway name" value="Ribosomal scanning and start codon recognition"/>
</dbReference>
<dbReference type="Reactome" id="R-MMU-72706">
    <property type="pathway name" value="GTP hydrolysis and joining of the 60S ribosomal subunit"/>
</dbReference>
<dbReference type="BioGRID-ORCS" id="66235">
    <property type="hits" value="4 hits in 79 CRISPR screens"/>
</dbReference>
<dbReference type="ChiTaRS" id="Eif1ax">
    <property type="organism name" value="mouse"/>
</dbReference>
<dbReference type="PRO" id="PR:Q8BMJ3"/>
<dbReference type="Proteomes" id="UP000000589">
    <property type="component" value="Chromosome X"/>
</dbReference>
<dbReference type="RNAct" id="Q8BMJ3">
    <property type="molecule type" value="protein"/>
</dbReference>
<dbReference type="Bgee" id="ENSMUSG00000067194">
    <property type="expression patterns" value="Expressed in otic placode and 264 other cell types or tissues"/>
</dbReference>
<dbReference type="GO" id="GO:0016282">
    <property type="term" value="C:eukaryotic 43S preinitiation complex"/>
    <property type="evidence" value="ECO:0007669"/>
    <property type="project" value="Ensembl"/>
</dbReference>
<dbReference type="GO" id="GO:0033290">
    <property type="term" value="C:eukaryotic 48S preinitiation complex"/>
    <property type="evidence" value="ECO:0007669"/>
    <property type="project" value="Ensembl"/>
</dbReference>
<dbReference type="GO" id="GO:0043614">
    <property type="term" value="C:multi-eIF complex"/>
    <property type="evidence" value="ECO:0007669"/>
    <property type="project" value="Ensembl"/>
</dbReference>
<dbReference type="GO" id="GO:0045202">
    <property type="term" value="C:synapse"/>
    <property type="evidence" value="ECO:0000314"/>
    <property type="project" value="SynGO"/>
</dbReference>
<dbReference type="GO" id="GO:0003743">
    <property type="term" value="F:translation initiation factor activity"/>
    <property type="evidence" value="ECO:0007669"/>
    <property type="project" value="UniProtKB-KW"/>
</dbReference>
<dbReference type="GO" id="GO:0000049">
    <property type="term" value="F:tRNA binding"/>
    <property type="evidence" value="ECO:0007669"/>
    <property type="project" value="UniProtKB-KW"/>
</dbReference>
<dbReference type="GO" id="GO:0042255">
    <property type="term" value="P:ribosome assembly"/>
    <property type="evidence" value="ECO:0007669"/>
    <property type="project" value="Ensembl"/>
</dbReference>
<dbReference type="CDD" id="cd05793">
    <property type="entry name" value="S1_IF1A"/>
    <property type="match status" value="1"/>
</dbReference>
<dbReference type="FunFam" id="2.40.50.140:FF:000071">
    <property type="entry name" value="Eukaryotic translation initiation factor 1A"/>
    <property type="match status" value="1"/>
</dbReference>
<dbReference type="Gene3D" id="2.40.50.140">
    <property type="entry name" value="Nucleic acid-binding proteins"/>
    <property type="match status" value="1"/>
</dbReference>
<dbReference type="HAMAP" id="MF_00216">
    <property type="entry name" value="aIF_1A"/>
    <property type="match status" value="1"/>
</dbReference>
<dbReference type="InterPro" id="IPR012340">
    <property type="entry name" value="NA-bd_OB-fold"/>
</dbReference>
<dbReference type="InterPro" id="IPR006196">
    <property type="entry name" value="RNA-binding_domain_S1_IF1"/>
</dbReference>
<dbReference type="InterPro" id="IPR001253">
    <property type="entry name" value="TIF_eIF-1A"/>
</dbReference>
<dbReference type="InterPro" id="IPR018104">
    <property type="entry name" value="TIF_eIF-1A_CS"/>
</dbReference>
<dbReference type="NCBIfam" id="TIGR00523">
    <property type="entry name" value="eIF-1A"/>
    <property type="match status" value="1"/>
</dbReference>
<dbReference type="PANTHER" id="PTHR21668">
    <property type="entry name" value="EIF-1A"/>
    <property type="match status" value="1"/>
</dbReference>
<dbReference type="Pfam" id="PF01176">
    <property type="entry name" value="eIF-1a"/>
    <property type="match status" value="1"/>
</dbReference>
<dbReference type="SMART" id="SM00652">
    <property type="entry name" value="eIF1a"/>
    <property type="match status" value="1"/>
</dbReference>
<dbReference type="SUPFAM" id="SSF50249">
    <property type="entry name" value="Nucleic acid-binding proteins"/>
    <property type="match status" value="1"/>
</dbReference>
<dbReference type="PROSITE" id="PS01262">
    <property type="entry name" value="IF1A"/>
    <property type="match status" value="1"/>
</dbReference>
<dbReference type="PROSITE" id="PS50832">
    <property type="entry name" value="S1_IF1_TYPE"/>
    <property type="match status" value="1"/>
</dbReference>
<gene>
    <name type="primary">Eif1ax</name>
    <name type="synonym">Eif1ay</name>
</gene>
<evidence type="ECO:0000250" key="1">
    <source>
        <dbReference type="UniProtKB" id="P47813"/>
    </source>
</evidence>
<evidence type="ECO:0000256" key="2">
    <source>
        <dbReference type="SAM" id="MobiDB-lite"/>
    </source>
</evidence>
<evidence type="ECO:0000305" key="3"/>
<accession>Q8BMJ3</accession>
<accession>Q3UY50</accession>
<accession>Q6ZWL8</accession>
<accession>Q8BJZ2</accession>
<accession>Q8BMH8</accession>
<accession>Q9CSL9</accession>
<sequence length="144" mass="16460">MPKNKGKGGKNRRRGKNENESEKRELVFKEDGQEYAQVIKMLGNGRLEAMCFDGVKRLCHIRGKLRKKVWINTSDIILVGLRDYQDNKADVILKYNADEARSLKAYGELPEHAKINETDTFGPGDDDEIQFDDIGDDDEDIDDI</sequence>
<organism>
    <name type="scientific">Mus musculus</name>
    <name type="common">Mouse</name>
    <dbReference type="NCBI Taxonomy" id="10090"/>
    <lineage>
        <taxon>Eukaryota</taxon>
        <taxon>Metazoa</taxon>
        <taxon>Chordata</taxon>
        <taxon>Craniata</taxon>
        <taxon>Vertebrata</taxon>
        <taxon>Euteleostomi</taxon>
        <taxon>Mammalia</taxon>
        <taxon>Eutheria</taxon>
        <taxon>Euarchontoglires</taxon>
        <taxon>Glires</taxon>
        <taxon>Rodentia</taxon>
        <taxon>Myomorpha</taxon>
        <taxon>Muroidea</taxon>
        <taxon>Muridae</taxon>
        <taxon>Murinae</taxon>
        <taxon>Mus</taxon>
        <taxon>Mus</taxon>
    </lineage>
</organism>
<name>IF1AX_MOUSE</name>
<comment type="function">
    <text evidence="1">Component of the 43S pre-initiation complex (43S PIC), which binds to the mRNA cap-proximal region, scans mRNA 5'-untranslated region, and locates the initiation codon. This protein enhances formation of the cap-proximal complex. Together with EIF1, facilitates scanning, start codon recognition, promotion of the assembly of 48S complex at the initiation codon (43S PIC becomes 48S PIC after the start codon is reached), and dissociation of aberrant complexes. After start codon location, together with EIF5B orients the initiator methionine-tRNA in a conformation that allows 60S ribosomal subunit joining to form the 80S initiation complex. Is released after 80S initiation complex formation, just after GTP hydrolysis by EIF5B, and before release of EIF5B. Its globular part is located in the A site of the 40S ribosomal subunit. Its interaction with EIF5 during scanning contribute to the maintenance of EIF1 within the open 43S PIC. In contrast to yeast orthologs, does not bind EIF1.</text>
</comment>
<comment type="subunit">
    <text evidence="1">Component of the 43S pre-initiation complex (43S PIC), which is composed of the 40S ribosomal subunit, EIF1, eIF1A (EIF1AX), eIF3 complex, EIF5 and eIF2-GTP-initiator tRNA complex (eIF2 ternary complex). Interacts with EIF5; this interaction contributes to the maintenance of EIF1 within the open 43S PIC. Interacts through its C-terminal domain (CTD) with the CTD of EIF5B; from the location of the start codon by the 43S complex until the formation of the 80S complex.</text>
</comment>
<comment type="subcellular location">
    <subcellularLocation>
        <location evidence="3">Cytoplasm</location>
    </subcellularLocation>
</comment>
<comment type="similarity">
    <text evidence="3">Belongs to the eIF-1A family.</text>
</comment>
<keyword id="KW-0963">Cytoplasm</keyword>
<keyword id="KW-0396">Initiation factor</keyword>
<keyword id="KW-0648">Protein biosynthesis</keyword>
<keyword id="KW-1185">Reference proteome</keyword>
<keyword id="KW-0694">RNA-binding</keyword>
<keyword id="KW-0820">tRNA-binding</keyword>
<protein>
    <recommendedName>
        <fullName>Eukaryotic translation initiation factor 1A, X-chromosomal</fullName>
        <shortName>eIF-1A X isoform</shortName>
        <shortName>eIF1A X isoform</shortName>
    </recommendedName>
    <alternativeName>
        <fullName>Eukaryotic translation initiation factor 4C</fullName>
        <shortName>eIF-4C</shortName>
    </alternativeName>
</protein>